<accession>Q20963</accession>
<organism evidence="5">
    <name type="scientific">Caenorhabditis elegans</name>
    <dbReference type="NCBI Taxonomy" id="6239"/>
    <lineage>
        <taxon>Eukaryota</taxon>
        <taxon>Metazoa</taxon>
        <taxon>Ecdysozoa</taxon>
        <taxon>Nematoda</taxon>
        <taxon>Chromadorea</taxon>
        <taxon>Rhabditida</taxon>
        <taxon>Rhabditina</taxon>
        <taxon>Rhabditomorpha</taxon>
        <taxon>Rhabditoidea</taxon>
        <taxon>Rhabditidae</taxon>
        <taxon>Peloderinae</taxon>
        <taxon>Caenorhabditis</taxon>
    </lineage>
</organism>
<keyword id="KW-1003">Cell membrane</keyword>
<keyword id="KW-0966">Cell projection</keyword>
<keyword id="KW-0297">G-protein coupled receptor</keyword>
<keyword id="KW-0325">Glycoprotein</keyword>
<keyword id="KW-0472">Membrane</keyword>
<keyword id="KW-0675">Receptor</keyword>
<keyword id="KW-1185">Reference proteome</keyword>
<keyword id="KW-0807">Transducer</keyword>
<keyword id="KW-0812">Transmembrane</keyword>
<keyword id="KW-1133">Transmembrane helix</keyword>
<feature type="chain" id="PRO_0000447259" description="Serpentine receptor class beta-13">
    <location>
        <begin position="1"/>
        <end position="345"/>
    </location>
</feature>
<feature type="topological domain" description="Extracellular" evidence="4">
    <location>
        <begin position="1"/>
        <end position="22"/>
    </location>
</feature>
<feature type="transmembrane region" description="Helical; Name=1" evidence="1">
    <location>
        <begin position="23"/>
        <end position="43"/>
    </location>
</feature>
<feature type="topological domain" description="Cytoplasmic" evidence="4">
    <location>
        <begin position="44"/>
        <end position="58"/>
    </location>
</feature>
<feature type="transmembrane region" description="Helical; Name=2" evidence="1">
    <location>
        <begin position="59"/>
        <end position="79"/>
    </location>
</feature>
<feature type="topological domain" description="Extracellular" evidence="4">
    <location>
        <begin position="80"/>
        <end position="103"/>
    </location>
</feature>
<feature type="transmembrane region" description="Helical; Name=3" evidence="1">
    <location>
        <begin position="104"/>
        <end position="124"/>
    </location>
</feature>
<feature type="topological domain" description="Cytoplasmic" evidence="4">
    <location>
        <begin position="125"/>
        <end position="142"/>
    </location>
</feature>
<feature type="transmembrane region" description="Helical; Name=4" evidence="1">
    <location>
        <begin position="143"/>
        <end position="163"/>
    </location>
</feature>
<feature type="topological domain" description="Extracellular" evidence="4">
    <location>
        <begin position="164"/>
        <end position="189"/>
    </location>
</feature>
<feature type="transmembrane region" description="Helical; Name=5" evidence="1">
    <location>
        <begin position="190"/>
        <end position="210"/>
    </location>
</feature>
<feature type="topological domain" description="Cytoplasmic" evidence="4">
    <location>
        <begin position="211"/>
        <end position="241"/>
    </location>
</feature>
<feature type="transmembrane region" description="Helical; Name=6" evidence="1">
    <location>
        <begin position="242"/>
        <end position="262"/>
    </location>
</feature>
<feature type="topological domain" description="Extracellular" evidence="4">
    <location>
        <begin position="263"/>
        <end position="280"/>
    </location>
</feature>
<feature type="transmembrane region" description="Helical; Name=7" evidence="1">
    <location>
        <begin position="281"/>
        <end position="301"/>
    </location>
</feature>
<feature type="topological domain" description="Cytoplasmic" evidence="4">
    <location>
        <begin position="302"/>
        <end position="345"/>
    </location>
</feature>
<feature type="glycosylation site" description="N-linked (GlcNAc...) asparagine" evidence="2">
    <location>
        <position position="5"/>
    </location>
</feature>
<feature type="glycosylation site" description="N-linked (GlcNAc...) asparagine" evidence="2">
    <location>
        <position position="97"/>
    </location>
</feature>
<feature type="glycosylation site" description="N-linked (GlcNAc...) asparagine" evidence="2">
    <location>
        <position position="180"/>
    </location>
</feature>
<feature type="glycosylation site" description="N-linked (GlcNAc...) asparagine" evidence="2">
    <location>
        <position position="275"/>
    </location>
</feature>
<comment type="function">
    <text evidence="3">G-protein coupled receptor that antagonizes the negative effects of the gcy-35 oxygen sensor on spermatogenesis (PubMed:28662030). This leads to the maintenance of mitochondrial function in developing spermatocytes and/or spermatids prior to testis maturation during the early larval stages (PubMed:28662030). Regulates the navigational capacity of sperm during hyperoxic conditions ensuring the proper targeting of sperm derived from males to the fertilization site in the uterus of hermaphrodites (PubMed:28662030). May act in the same signaling pathway as the neuropeptide flp-21 (PubMed:28662030).</text>
</comment>
<comment type="subcellular location">
    <subcellularLocation>
        <location evidence="4">Cell membrane</location>
        <topology evidence="1">Multi-pass membrane protein</topology>
    </subcellularLocation>
    <subcellularLocation>
        <location evidence="3">Perikaryon</location>
    </subcellularLocation>
    <subcellularLocation>
        <location evidence="3">Cell projection</location>
        <location evidence="3">Dendrite</location>
    </subcellularLocation>
    <text evidence="3">Detected in ciliated sensory neurons.</text>
</comment>
<comment type="tissue specificity">
    <text evidence="3">Expressed in the head sensory neurons ASI, ASK and AWB (PubMed:28662030). Not expressed in male somatic gonads or sperm (PubMed:28662030).</text>
</comment>
<comment type="developmental stage">
    <text evidence="3">Expressed throughout larval development and adulthood.</text>
</comment>
<comment type="disruption phenotype">
    <text evidence="3">Reduced brood size, which is in part due to an abnormal distribution of male-derived sperm in the hermaphrodite uterus following mating, with sperm reversing course frequently and accumulating at the spermathecal-uterine valve 1 hour following mating (PubMed:28662030). No visible defects in oogenesis (PubMed:28662030). Double knockout with the mcu-1 ju1154 mutant suppresses the sperm navigation defect in the srb-13 single mutant (PubMed:28662030).</text>
</comment>
<comment type="similarity">
    <text evidence="4">Belongs to the nematode receptor-like protein srb family.</text>
</comment>
<evidence type="ECO:0000255" key="1"/>
<evidence type="ECO:0000255" key="2">
    <source>
        <dbReference type="PROSITE-ProRule" id="PRU00498"/>
    </source>
</evidence>
<evidence type="ECO:0000269" key="3">
    <source>
    </source>
</evidence>
<evidence type="ECO:0000305" key="4"/>
<evidence type="ECO:0000312" key="5">
    <source>
        <dbReference type="Proteomes" id="UP000001940"/>
    </source>
</evidence>
<evidence type="ECO:0000312" key="6">
    <source>
        <dbReference type="WormBase" id="F58A6.11"/>
    </source>
</evidence>
<protein>
    <recommendedName>
        <fullName evidence="6">Serpentine receptor class beta-13</fullName>
        <shortName evidence="4">Protein srb-13</shortName>
    </recommendedName>
</protein>
<gene>
    <name evidence="6" type="primary">srb-13</name>
    <name evidence="6" type="ORF">F58A6.11</name>
</gene>
<reference evidence="5" key="1">
    <citation type="journal article" date="1998" name="Science">
        <title>Genome sequence of the nematode C. elegans: a platform for investigating biology.</title>
        <authorList>
            <consortium name="The C. elegans sequencing consortium"/>
        </authorList>
    </citation>
    <scope>NUCLEOTIDE SEQUENCE [LARGE SCALE GENOMIC DNA]</scope>
    <source>
        <strain evidence="5">Bristol N2</strain>
    </source>
</reference>
<reference evidence="4" key="2">
    <citation type="journal article" date="2017" name="PLoS Biol.">
        <title>Chemosensory and hyperoxia circuits in C. elegans males influence sperm navigational capacity.</title>
        <authorList>
            <person name="Hoang H.D."/>
            <person name="Miller M.A."/>
        </authorList>
    </citation>
    <scope>FUNCTION</scope>
    <scope>SUBCELLULAR LOCATION</scope>
    <scope>TISSUE SPECIFICITY</scope>
    <scope>DEVELOPMENTAL STAGE</scope>
    <scope>DISRUPTION PHENOTYPE</scope>
</reference>
<dbReference type="EMBL" id="BX284602">
    <property type="protein sequence ID" value="CCD65841.1"/>
    <property type="molecule type" value="Genomic_DNA"/>
</dbReference>
<dbReference type="PIR" id="T16498">
    <property type="entry name" value="T16498"/>
</dbReference>
<dbReference type="RefSeq" id="NP_494958.1">
    <property type="nucleotide sequence ID" value="NM_062557.1"/>
</dbReference>
<dbReference type="FunCoup" id="Q20963">
    <property type="interactions" value="3"/>
</dbReference>
<dbReference type="STRING" id="6239.F58A6.11.1"/>
<dbReference type="GlyCosmos" id="Q20963">
    <property type="glycosylation" value="4 sites, No reported glycans"/>
</dbReference>
<dbReference type="PaxDb" id="6239-F58A6.11"/>
<dbReference type="EnsemblMetazoa" id="F58A6.11.1">
    <property type="protein sequence ID" value="F58A6.11.1"/>
    <property type="gene ID" value="WBGene00019028"/>
</dbReference>
<dbReference type="GeneID" id="3565668"/>
<dbReference type="KEGG" id="cel:CELE_F58A6.11"/>
<dbReference type="UCSC" id="F58A6.11">
    <property type="organism name" value="c. elegans"/>
</dbReference>
<dbReference type="AGR" id="WB:WBGene00019028"/>
<dbReference type="CTD" id="3565668"/>
<dbReference type="WormBase" id="F58A6.11">
    <property type="protein sequence ID" value="CE07297"/>
    <property type="gene ID" value="WBGene00019028"/>
    <property type="gene designation" value="srb-13"/>
</dbReference>
<dbReference type="eggNOG" id="ENOG502SXP2">
    <property type="taxonomic scope" value="Eukaryota"/>
</dbReference>
<dbReference type="GeneTree" id="ENSGT00970000195867"/>
<dbReference type="HOGENOM" id="CLU_045882_1_0_1"/>
<dbReference type="InParanoid" id="Q20963"/>
<dbReference type="OMA" id="GVNCAIP"/>
<dbReference type="OrthoDB" id="5836746at2759"/>
<dbReference type="PhylomeDB" id="Q20963"/>
<dbReference type="PRO" id="PR:Q20963"/>
<dbReference type="Proteomes" id="UP000001940">
    <property type="component" value="Chromosome II"/>
</dbReference>
<dbReference type="GO" id="GO:0030425">
    <property type="term" value="C:dendrite"/>
    <property type="evidence" value="ECO:0007669"/>
    <property type="project" value="UniProtKB-SubCell"/>
</dbReference>
<dbReference type="GO" id="GO:0043204">
    <property type="term" value="C:perikaryon"/>
    <property type="evidence" value="ECO:0007669"/>
    <property type="project" value="UniProtKB-SubCell"/>
</dbReference>
<dbReference type="GO" id="GO:0005886">
    <property type="term" value="C:plasma membrane"/>
    <property type="evidence" value="ECO:0007669"/>
    <property type="project" value="UniProtKB-SubCell"/>
</dbReference>
<dbReference type="GO" id="GO:0004930">
    <property type="term" value="F:G protein-coupled receptor activity"/>
    <property type="evidence" value="ECO:0007669"/>
    <property type="project" value="UniProtKB-KW"/>
</dbReference>
<dbReference type="GO" id="GO:0007606">
    <property type="term" value="P:sensory perception of chemical stimulus"/>
    <property type="evidence" value="ECO:0007669"/>
    <property type="project" value="InterPro"/>
</dbReference>
<dbReference type="InterPro" id="IPR002184">
    <property type="entry name" value="7TM_GPCR_serpentine_rcpt_Srb"/>
</dbReference>
<dbReference type="PANTHER" id="PTHR31216">
    <property type="entry name" value="SERPENTINE RECEPTOR CLASS BETA-1-RELATED-RELATED"/>
    <property type="match status" value="1"/>
</dbReference>
<dbReference type="PANTHER" id="PTHR31216:SF5">
    <property type="entry name" value="SERPENTINE RECEPTOR CLASS BETA-13"/>
    <property type="match status" value="1"/>
</dbReference>
<dbReference type="Pfam" id="PF02175">
    <property type="entry name" value="7TM_GPCR_Srb"/>
    <property type="match status" value="1"/>
</dbReference>
<dbReference type="PRINTS" id="PR00699">
    <property type="entry name" value="TMPROTEINSRB"/>
</dbReference>
<name>SRB13_CAEEL</name>
<sequence>MAGINQTKCDLGFQITFNTVYRFSQFYTFSVSSFAVPGLIYFMFKRLFQLYFHGNLKTLLIAYFISILLYAVMLCFAFGYQFFVPFFIKSNCDLIINKTLFKYIHTSVIFLLTTPMMFPLGFSIERFTAMAMASRYENIRTLIGPVLVIFLIIPNCIIFYFLFQHETYDDTFISFLMLPNTTAVNFNTYLWFLLYLNIGNLALNVLLLLVHRKFKRRLLLHKTSLSTRYAIEEISQSSKFTLIITFTHLLFFGCNTICSILVRVLGEPFFGSFINHSVARGVNCAVPTYNLVIVVVGFVSLSKLNSRRQQEVQTTVQLKTTGKEGARNYDNITANQWATITQIGF</sequence>
<proteinExistence type="evidence at transcript level"/>